<keyword id="KW-1185">Reference proteome</keyword>
<keyword id="KW-0687">Ribonucleoprotein</keyword>
<keyword id="KW-0689">Ribosomal protein</keyword>
<keyword id="KW-0694">RNA-binding</keyword>
<keyword id="KW-0699">rRNA-binding</keyword>
<protein>
    <recommendedName>
        <fullName evidence="1">Large ribosomal subunit protein bL31</fullName>
    </recommendedName>
    <alternativeName>
        <fullName evidence="2">50S ribosomal protein L31</fullName>
    </alternativeName>
</protein>
<name>RL31_GLUDA</name>
<reference key="1">
    <citation type="journal article" date="2009" name="BMC Genomics">
        <title>Complete genome sequence of the sugarcane nitrogen-fixing endophyte Gluconacetobacter diazotrophicus Pal5.</title>
        <authorList>
            <person name="Bertalan M."/>
            <person name="Albano R."/>
            <person name="de Padua V."/>
            <person name="Rouws L."/>
            <person name="Rojas C."/>
            <person name="Hemerly A."/>
            <person name="Teixeira K."/>
            <person name="Schwab S."/>
            <person name="Araujo J."/>
            <person name="Oliveira A."/>
            <person name="Franca L."/>
            <person name="Magalhaes V."/>
            <person name="Alqueres S."/>
            <person name="Cardoso A."/>
            <person name="Almeida W."/>
            <person name="Loureiro M.M."/>
            <person name="Nogueira E."/>
            <person name="Cidade D."/>
            <person name="Oliveira D."/>
            <person name="Simao T."/>
            <person name="Macedo J."/>
            <person name="Valadao A."/>
            <person name="Dreschsel M."/>
            <person name="Freitas F."/>
            <person name="Vidal M."/>
            <person name="Guedes H."/>
            <person name="Rodrigues E."/>
            <person name="Meneses C."/>
            <person name="Brioso P."/>
            <person name="Pozzer L."/>
            <person name="Figueiredo D."/>
            <person name="Montano H."/>
            <person name="Junior J."/>
            <person name="de Souza Filho G."/>
            <person name="Martin Quintana Flores V."/>
            <person name="Ferreira B."/>
            <person name="Branco A."/>
            <person name="Gonzalez P."/>
            <person name="Guillobel H."/>
            <person name="Lemos M."/>
            <person name="Seibel L."/>
            <person name="Macedo J."/>
            <person name="Alves-Ferreira M."/>
            <person name="Sachetto-Martins G."/>
            <person name="Coelho A."/>
            <person name="Santos E."/>
            <person name="Amaral G."/>
            <person name="Neves A."/>
            <person name="Pacheco A.B."/>
            <person name="Carvalho D."/>
            <person name="Lery L."/>
            <person name="Bisch P."/>
            <person name="Rossle S.C."/>
            <person name="Urmenyi T."/>
            <person name="Rael Pereira A."/>
            <person name="Silva R."/>
            <person name="Rondinelli E."/>
            <person name="von Kruger W."/>
            <person name="Martins O."/>
            <person name="Baldani J.I."/>
            <person name="Ferreira P.C."/>
        </authorList>
    </citation>
    <scope>NUCLEOTIDE SEQUENCE [LARGE SCALE GENOMIC DNA]</scope>
    <source>
        <strain>ATCC 49037 / DSM 5601 / CCUG 37298 / CIP 103539 / LMG 7603 / PAl5</strain>
    </source>
</reference>
<reference key="2">
    <citation type="journal article" date="2010" name="Stand. Genomic Sci.">
        <title>Two genome sequences of the same bacterial strain, Gluconacetobacter diazotrophicus PAl 5, suggest a new standard in genome sequence submission.</title>
        <authorList>
            <person name="Giongo A."/>
            <person name="Tyler H.L."/>
            <person name="Zipperer U.N."/>
            <person name="Triplett E.W."/>
        </authorList>
    </citation>
    <scope>NUCLEOTIDE SEQUENCE [LARGE SCALE GENOMIC DNA]</scope>
    <source>
        <strain>ATCC 49037 / DSM 5601 / CCUG 37298 / CIP 103539 / LMG 7603 / PAl5</strain>
    </source>
</reference>
<evidence type="ECO:0000255" key="1">
    <source>
        <dbReference type="HAMAP-Rule" id="MF_00501"/>
    </source>
</evidence>
<evidence type="ECO:0000305" key="2"/>
<organism>
    <name type="scientific">Gluconacetobacter diazotrophicus (strain ATCC 49037 / DSM 5601 / CCUG 37298 / CIP 103539 / LMG 7603 / PAl5)</name>
    <dbReference type="NCBI Taxonomy" id="272568"/>
    <lineage>
        <taxon>Bacteria</taxon>
        <taxon>Pseudomonadati</taxon>
        <taxon>Pseudomonadota</taxon>
        <taxon>Alphaproteobacteria</taxon>
        <taxon>Acetobacterales</taxon>
        <taxon>Acetobacteraceae</taxon>
        <taxon>Gluconacetobacter</taxon>
    </lineage>
</organism>
<gene>
    <name evidence="1" type="primary">rpmE</name>
    <name type="ordered locus">GDI1730</name>
    <name type="ordered locus">Gdia_3511</name>
</gene>
<proteinExistence type="inferred from homology"/>
<dbReference type="EMBL" id="CP001189">
    <property type="protein sequence ID" value="ACI53235.1"/>
    <property type="molecule type" value="Genomic_DNA"/>
</dbReference>
<dbReference type="EMBL" id="AM889285">
    <property type="protein sequence ID" value="CAP55673.1"/>
    <property type="molecule type" value="Genomic_DNA"/>
</dbReference>
<dbReference type="RefSeq" id="WP_012225209.1">
    <property type="nucleotide sequence ID" value="NC_010125.1"/>
</dbReference>
<dbReference type="SMR" id="A9HHS1"/>
<dbReference type="STRING" id="272568.GDI1730"/>
<dbReference type="KEGG" id="gdi:GDI1730"/>
<dbReference type="KEGG" id="gdj:Gdia_3511"/>
<dbReference type="eggNOG" id="COG0254">
    <property type="taxonomic scope" value="Bacteria"/>
</dbReference>
<dbReference type="HOGENOM" id="CLU_114306_3_2_5"/>
<dbReference type="OrthoDB" id="9803251at2"/>
<dbReference type="Proteomes" id="UP000001176">
    <property type="component" value="Chromosome"/>
</dbReference>
<dbReference type="GO" id="GO:1990904">
    <property type="term" value="C:ribonucleoprotein complex"/>
    <property type="evidence" value="ECO:0007669"/>
    <property type="project" value="UniProtKB-KW"/>
</dbReference>
<dbReference type="GO" id="GO:0005840">
    <property type="term" value="C:ribosome"/>
    <property type="evidence" value="ECO:0007669"/>
    <property type="project" value="UniProtKB-KW"/>
</dbReference>
<dbReference type="GO" id="GO:0019843">
    <property type="term" value="F:rRNA binding"/>
    <property type="evidence" value="ECO:0007669"/>
    <property type="project" value="UniProtKB-KW"/>
</dbReference>
<dbReference type="GO" id="GO:0003735">
    <property type="term" value="F:structural constituent of ribosome"/>
    <property type="evidence" value="ECO:0007669"/>
    <property type="project" value="InterPro"/>
</dbReference>
<dbReference type="GO" id="GO:0006412">
    <property type="term" value="P:translation"/>
    <property type="evidence" value="ECO:0007669"/>
    <property type="project" value="UniProtKB-UniRule"/>
</dbReference>
<dbReference type="Gene3D" id="4.10.830.30">
    <property type="entry name" value="Ribosomal protein L31"/>
    <property type="match status" value="1"/>
</dbReference>
<dbReference type="HAMAP" id="MF_00501">
    <property type="entry name" value="Ribosomal_bL31_1"/>
    <property type="match status" value="1"/>
</dbReference>
<dbReference type="InterPro" id="IPR034704">
    <property type="entry name" value="Ribosomal_bL28/bL31-like_sf"/>
</dbReference>
<dbReference type="InterPro" id="IPR002150">
    <property type="entry name" value="Ribosomal_bL31"/>
</dbReference>
<dbReference type="InterPro" id="IPR027491">
    <property type="entry name" value="Ribosomal_bL31_A"/>
</dbReference>
<dbReference type="InterPro" id="IPR042105">
    <property type="entry name" value="Ribosomal_bL31_sf"/>
</dbReference>
<dbReference type="NCBIfam" id="TIGR00105">
    <property type="entry name" value="L31"/>
    <property type="match status" value="1"/>
</dbReference>
<dbReference type="NCBIfam" id="NF001809">
    <property type="entry name" value="PRK00528.1"/>
    <property type="match status" value="1"/>
</dbReference>
<dbReference type="PANTHER" id="PTHR33280">
    <property type="entry name" value="50S RIBOSOMAL PROTEIN L31, CHLOROPLASTIC"/>
    <property type="match status" value="1"/>
</dbReference>
<dbReference type="PANTHER" id="PTHR33280:SF6">
    <property type="entry name" value="LARGE RIBOSOMAL SUBUNIT PROTEIN BL31A"/>
    <property type="match status" value="1"/>
</dbReference>
<dbReference type="Pfam" id="PF01197">
    <property type="entry name" value="Ribosomal_L31"/>
    <property type="match status" value="1"/>
</dbReference>
<dbReference type="PRINTS" id="PR01249">
    <property type="entry name" value="RIBOSOMALL31"/>
</dbReference>
<dbReference type="SUPFAM" id="SSF143800">
    <property type="entry name" value="L28p-like"/>
    <property type="match status" value="1"/>
</dbReference>
<dbReference type="PROSITE" id="PS01143">
    <property type="entry name" value="RIBOSOMAL_L31"/>
    <property type="match status" value="1"/>
</dbReference>
<comment type="function">
    <text evidence="1">Binds the 23S rRNA.</text>
</comment>
<comment type="subunit">
    <text evidence="1">Part of the 50S ribosomal subunit.</text>
</comment>
<comment type="similarity">
    <text evidence="1">Belongs to the bacterial ribosomal protein bL31 family. Type A subfamily.</text>
</comment>
<feature type="chain" id="PRO_1000126638" description="Large ribosomal subunit protein bL31">
    <location>
        <begin position="1"/>
        <end position="76"/>
    </location>
</feature>
<sequence>MKSGIHPDYHEINVIMTDGTEYKTRSCYAQPGATLRLDIDPKSHPAWTGVQRMLDTGGQVAKFNKKFGGLGRRAKA</sequence>
<accession>A9HHS1</accession>